<dbReference type="EC" id="1.4.3.5" evidence="1"/>
<dbReference type="EMBL" id="AM933172">
    <property type="protein sequence ID" value="CAR33181.1"/>
    <property type="molecule type" value="Genomic_DNA"/>
</dbReference>
<dbReference type="RefSeq" id="WP_001282334.1">
    <property type="nucleotide sequence ID" value="NC_011294.1"/>
</dbReference>
<dbReference type="SMR" id="B5QV11"/>
<dbReference type="KEGG" id="set:SEN1599"/>
<dbReference type="HOGENOM" id="CLU_032263_2_2_6"/>
<dbReference type="UniPathway" id="UPA01068">
    <property type="reaction ID" value="UER00304"/>
</dbReference>
<dbReference type="UniPathway" id="UPA01068">
    <property type="reaction ID" value="UER00305"/>
</dbReference>
<dbReference type="Proteomes" id="UP000000613">
    <property type="component" value="Chromosome"/>
</dbReference>
<dbReference type="GO" id="GO:0010181">
    <property type="term" value="F:FMN binding"/>
    <property type="evidence" value="ECO:0007669"/>
    <property type="project" value="UniProtKB-UniRule"/>
</dbReference>
<dbReference type="GO" id="GO:0004733">
    <property type="term" value="F:pyridoxamine phosphate oxidase activity"/>
    <property type="evidence" value="ECO:0007669"/>
    <property type="project" value="UniProtKB-UniRule"/>
</dbReference>
<dbReference type="GO" id="GO:0008615">
    <property type="term" value="P:pyridoxine biosynthetic process"/>
    <property type="evidence" value="ECO:0007669"/>
    <property type="project" value="UniProtKB-KW"/>
</dbReference>
<dbReference type="FunFam" id="2.30.110.10:FF:000001">
    <property type="entry name" value="Pyridoxine/pyridoxamine 5'-phosphate oxidase"/>
    <property type="match status" value="1"/>
</dbReference>
<dbReference type="Gene3D" id="2.30.110.10">
    <property type="entry name" value="Electron Transport, Fmn-binding Protein, Chain A"/>
    <property type="match status" value="1"/>
</dbReference>
<dbReference type="HAMAP" id="MF_01629">
    <property type="entry name" value="PdxH"/>
    <property type="match status" value="1"/>
</dbReference>
<dbReference type="InterPro" id="IPR000659">
    <property type="entry name" value="Pyridox_Oxase"/>
</dbReference>
<dbReference type="InterPro" id="IPR019740">
    <property type="entry name" value="Pyridox_Oxase_CS"/>
</dbReference>
<dbReference type="InterPro" id="IPR011576">
    <property type="entry name" value="Pyridox_Oxase_N"/>
</dbReference>
<dbReference type="InterPro" id="IPR019576">
    <property type="entry name" value="Pyridoxamine_oxidase_dimer_C"/>
</dbReference>
<dbReference type="InterPro" id="IPR012349">
    <property type="entry name" value="Split_barrel_FMN-bd"/>
</dbReference>
<dbReference type="NCBIfam" id="TIGR00558">
    <property type="entry name" value="pdxH"/>
    <property type="match status" value="1"/>
</dbReference>
<dbReference type="NCBIfam" id="NF004231">
    <property type="entry name" value="PRK05679.1"/>
    <property type="match status" value="1"/>
</dbReference>
<dbReference type="PANTHER" id="PTHR10851:SF0">
    <property type="entry name" value="PYRIDOXINE-5'-PHOSPHATE OXIDASE"/>
    <property type="match status" value="1"/>
</dbReference>
<dbReference type="PANTHER" id="PTHR10851">
    <property type="entry name" value="PYRIDOXINE-5-PHOSPHATE OXIDASE"/>
    <property type="match status" value="1"/>
</dbReference>
<dbReference type="Pfam" id="PF10590">
    <property type="entry name" value="PNP_phzG_C"/>
    <property type="match status" value="1"/>
</dbReference>
<dbReference type="Pfam" id="PF01243">
    <property type="entry name" value="PNPOx_N"/>
    <property type="match status" value="1"/>
</dbReference>
<dbReference type="PIRSF" id="PIRSF000190">
    <property type="entry name" value="Pyd_amn-ph_oxd"/>
    <property type="match status" value="1"/>
</dbReference>
<dbReference type="SUPFAM" id="SSF50475">
    <property type="entry name" value="FMN-binding split barrel"/>
    <property type="match status" value="1"/>
</dbReference>
<dbReference type="PROSITE" id="PS01064">
    <property type="entry name" value="PYRIDOX_OXIDASE"/>
    <property type="match status" value="1"/>
</dbReference>
<evidence type="ECO:0000255" key="1">
    <source>
        <dbReference type="HAMAP-Rule" id="MF_01629"/>
    </source>
</evidence>
<sequence>MSDNDQLQQIAHLRREYTKGGLRRRDLPAEPLTLFERWLGQACDARLADPTAMVVATVDDKGQPYQRIVLLKHYDEKGLVFYTNLGSRKAHQIEHNPRISLLFPWHMLERQVMVTGKAERLSTLEVVRYFHSRPRDSQIGAWVSKQSSRISARGILESKFLELKQKFQQGEVPLPSFWGGFRVSIEQMEFWQGGEHRLHDRFLYQRDDGAWKIDRLAP</sequence>
<accession>B5QV11</accession>
<name>PDXH_SALEP</name>
<protein>
    <recommendedName>
        <fullName evidence="1">Pyridoxine/pyridoxamine 5'-phosphate oxidase</fullName>
        <ecNumber evidence="1">1.4.3.5</ecNumber>
    </recommendedName>
    <alternativeName>
        <fullName evidence="1">PNP/PMP oxidase</fullName>
        <shortName evidence="1">PNPOx</shortName>
    </alternativeName>
    <alternativeName>
        <fullName evidence="1">Pyridoxal 5'-phosphate synthase</fullName>
    </alternativeName>
</protein>
<proteinExistence type="inferred from homology"/>
<reference key="1">
    <citation type="journal article" date="2008" name="Genome Res.">
        <title>Comparative genome analysis of Salmonella enteritidis PT4 and Salmonella gallinarum 287/91 provides insights into evolutionary and host adaptation pathways.</title>
        <authorList>
            <person name="Thomson N.R."/>
            <person name="Clayton D.J."/>
            <person name="Windhorst D."/>
            <person name="Vernikos G."/>
            <person name="Davidson S."/>
            <person name="Churcher C."/>
            <person name="Quail M.A."/>
            <person name="Stevens M."/>
            <person name="Jones M.A."/>
            <person name="Watson M."/>
            <person name="Barron A."/>
            <person name="Layton A."/>
            <person name="Pickard D."/>
            <person name="Kingsley R.A."/>
            <person name="Bignell A."/>
            <person name="Clark L."/>
            <person name="Harris B."/>
            <person name="Ormond D."/>
            <person name="Abdellah Z."/>
            <person name="Brooks K."/>
            <person name="Cherevach I."/>
            <person name="Chillingworth T."/>
            <person name="Woodward J."/>
            <person name="Norberczak H."/>
            <person name="Lord A."/>
            <person name="Arrowsmith C."/>
            <person name="Jagels K."/>
            <person name="Moule S."/>
            <person name="Mungall K."/>
            <person name="Saunders M."/>
            <person name="Whitehead S."/>
            <person name="Chabalgoity J.A."/>
            <person name="Maskell D."/>
            <person name="Humphreys T."/>
            <person name="Roberts M."/>
            <person name="Barrow P.A."/>
            <person name="Dougan G."/>
            <person name="Parkhill J."/>
        </authorList>
    </citation>
    <scope>NUCLEOTIDE SEQUENCE [LARGE SCALE GENOMIC DNA]</scope>
    <source>
        <strain>P125109</strain>
    </source>
</reference>
<keyword id="KW-0285">Flavoprotein</keyword>
<keyword id="KW-0288">FMN</keyword>
<keyword id="KW-0560">Oxidoreductase</keyword>
<keyword id="KW-0664">Pyridoxine biosynthesis</keyword>
<comment type="function">
    <text evidence="1">Catalyzes the oxidation of either pyridoxine 5'-phosphate (PNP) or pyridoxamine 5'-phosphate (PMP) into pyridoxal 5'-phosphate (PLP).</text>
</comment>
<comment type="catalytic activity">
    <reaction evidence="1">
        <text>pyridoxamine 5'-phosphate + O2 + H2O = pyridoxal 5'-phosphate + H2O2 + NH4(+)</text>
        <dbReference type="Rhea" id="RHEA:15817"/>
        <dbReference type="ChEBI" id="CHEBI:15377"/>
        <dbReference type="ChEBI" id="CHEBI:15379"/>
        <dbReference type="ChEBI" id="CHEBI:16240"/>
        <dbReference type="ChEBI" id="CHEBI:28938"/>
        <dbReference type="ChEBI" id="CHEBI:58451"/>
        <dbReference type="ChEBI" id="CHEBI:597326"/>
        <dbReference type="EC" id="1.4.3.5"/>
    </reaction>
</comment>
<comment type="catalytic activity">
    <reaction evidence="1">
        <text>pyridoxine 5'-phosphate + O2 = pyridoxal 5'-phosphate + H2O2</text>
        <dbReference type="Rhea" id="RHEA:15149"/>
        <dbReference type="ChEBI" id="CHEBI:15379"/>
        <dbReference type="ChEBI" id="CHEBI:16240"/>
        <dbReference type="ChEBI" id="CHEBI:58589"/>
        <dbReference type="ChEBI" id="CHEBI:597326"/>
        <dbReference type="EC" id="1.4.3.5"/>
    </reaction>
</comment>
<comment type="cofactor">
    <cofactor evidence="1">
        <name>FMN</name>
        <dbReference type="ChEBI" id="CHEBI:58210"/>
    </cofactor>
    <text evidence="1">Binds 1 FMN per subunit.</text>
</comment>
<comment type="pathway">
    <text evidence="1">Cofactor metabolism; pyridoxal 5'-phosphate salvage; pyridoxal 5'-phosphate from pyridoxamine 5'-phosphate: step 1/1.</text>
</comment>
<comment type="pathway">
    <text evidence="1">Cofactor metabolism; pyridoxal 5'-phosphate salvage; pyridoxal 5'-phosphate from pyridoxine 5'-phosphate: step 1/1.</text>
</comment>
<comment type="subunit">
    <text evidence="1">Homodimer.</text>
</comment>
<comment type="similarity">
    <text evidence="1">Belongs to the pyridoxamine 5'-phosphate oxidase family.</text>
</comment>
<organism>
    <name type="scientific">Salmonella enteritidis PT4 (strain P125109)</name>
    <dbReference type="NCBI Taxonomy" id="550537"/>
    <lineage>
        <taxon>Bacteria</taxon>
        <taxon>Pseudomonadati</taxon>
        <taxon>Pseudomonadota</taxon>
        <taxon>Gammaproteobacteria</taxon>
        <taxon>Enterobacterales</taxon>
        <taxon>Enterobacteriaceae</taxon>
        <taxon>Salmonella</taxon>
    </lineage>
</organism>
<gene>
    <name evidence="1" type="primary">pdxH</name>
    <name type="ordered locus">SEN1599</name>
</gene>
<feature type="chain" id="PRO_1000186334" description="Pyridoxine/pyridoxamine 5'-phosphate oxidase">
    <location>
        <begin position="1"/>
        <end position="218"/>
    </location>
</feature>
<feature type="binding site" evidence="1">
    <location>
        <begin position="14"/>
        <end position="17"/>
    </location>
    <ligand>
        <name>substrate</name>
    </ligand>
</feature>
<feature type="binding site" evidence="1">
    <location>
        <begin position="67"/>
        <end position="72"/>
    </location>
    <ligand>
        <name>FMN</name>
        <dbReference type="ChEBI" id="CHEBI:58210"/>
    </ligand>
</feature>
<feature type="binding site" evidence="1">
    <location>
        <position position="72"/>
    </location>
    <ligand>
        <name>substrate</name>
    </ligand>
</feature>
<feature type="binding site" evidence="1">
    <location>
        <begin position="82"/>
        <end position="83"/>
    </location>
    <ligand>
        <name>FMN</name>
        <dbReference type="ChEBI" id="CHEBI:58210"/>
    </ligand>
</feature>
<feature type="binding site" evidence="1">
    <location>
        <position position="88"/>
    </location>
    <ligand>
        <name>FMN</name>
        <dbReference type="ChEBI" id="CHEBI:58210"/>
    </ligand>
</feature>
<feature type="binding site" evidence="1">
    <location>
        <position position="89"/>
    </location>
    <ligand>
        <name>FMN</name>
        <dbReference type="ChEBI" id="CHEBI:58210"/>
    </ligand>
</feature>
<feature type="binding site" evidence="1">
    <location>
        <position position="111"/>
    </location>
    <ligand>
        <name>FMN</name>
        <dbReference type="ChEBI" id="CHEBI:58210"/>
    </ligand>
</feature>
<feature type="binding site" evidence="1">
    <location>
        <position position="129"/>
    </location>
    <ligand>
        <name>substrate</name>
    </ligand>
</feature>
<feature type="binding site" evidence="1">
    <location>
        <position position="133"/>
    </location>
    <ligand>
        <name>substrate</name>
    </ligand>
</feature>
<feature type="binding site" evidence="1">
    <location>
        <position position="137"/>
    </location>
    <ligand>
        <name>substrate</name>
    </ligand>
</feature>
<feature type="binding site" evidence="1">
    <location>
        <begin position="146"/>
        <end position="147"/>
    </location>
    <ligand>
        <name>FMN</name>
        <dbReference type="ChEBI" id="CHEBI:58210"/>
    </ligand>
</feature>
<feature type="binding site" evidence="1">
    <location>
        <position position="191"/>
    </location>
    <ligand>
        <name>FMN</name>
        <dbReference type="ChEBI" id="CHEBI:58210"/>
    </ligand>
</feature>
<feature type="binding site" evidence="1">
    <location>
        <begin position="197"/>
        <end position="199"/>
    </location>
    <ligand>
        <name>substrate</name>
    </ligand>
</feature>
<feature type="binding site" evidence="1">
    <location>
        <position position="201"/>
    </location>
    <ligand>
        <name>FMN</name>
        <dbReference type="ChEBI" id="CHEBI:58210"/>
    </ligand>
</feature>